<accession>Q724L7</accession>
<feature type="chain" id="PRO_0000157202" description="Putative septation protein SpoVG 1">
    <location>
        <begin position="1"/>
        <end position="102"/>
    </location>
</feature>
<name>SP5G1_LISMF</name>
<proteinExistence type="inferred from homology"/>
<comment type="function">
    <text evidence="1">Could be involved in septation.</text>
</comment>
<comment type="similarity">
    <text evidence="1">Belongs to the SpoVG family.</text>
</comment>
<sequence length="102" mass="11257">MEITDVRLRRVETDGRMKAISSITIDGEFVIHDIRVIDGNEGLFVAMPSKRTPDGEFRDIAHPINSGTRAKIQEAVLAAYEVADEPAVNEESSADESIVEEN</sequence>
<organism>
    <name type="scientific">Listeria monocytogenes serotype 4b (strain F2365)</name>
    <dbReference type="NCBI Taxonomy" id="265669"/>
    <lineage>
        <taxon>Bacteria</taxon>
        <taxon>Bacillati</taxon>
        <taxon>Bacillota</taxon>
        <taxon>Bacilli</taxon>
        <taxon>Bacillales</taxon>
        <taxon>Listeriaceae</taxon>
        <taxon>Listeria</taxon>
    </lineage>
</organism>
<reference key="1">
    <citation type="journal article" date="2004" name="Nucleic Acids Res.">
        <title>Whole genome comparisons of serotype 4b and 1/2a strains of the food-borne pathogen Listeria monocytogenes reveal new insights into the core genome components of this species.</title>
        <authorList>
            <person name="Nelson K.E."/>
            <person name="Fouts D.E."/>
            <person name="Mongodin E.F."/>
            <person name="Ravel J."/>
            <person name="DeBoy R.T."/>
            <person name="Kolonay J.F."/>
            <person name="Rasko D.A."/>
            <person name="Angiuoli S.V."/>
            <person name="Gill S.R."/>
            <person name="Paulsen I.T."/>
            <person name="Peterson J.D."/>
            <person name="White O."/>
            <person name="Nelson W.C."/>
            <person name="Nierman W.C."/>
            <person name="Beanan M.J."/>
            <person name="Brinkac L.M."/>
            <person name="Daugherty S.C."/>
            <person name="Dodson R.J."/>
            <person name="Durkin A.S."/>
            <person name="Madupu R."/>
            <person name="Haft D.H."/>
            <person name="Selengut J."/>
            <person name="Van Aken S.E."/>
            <person name="Khouri H.M."/>
            <person name="Fedorova N."/>
            <person name="Forberger H.A."/>
            <person name="Tran B."/>
            <person name="Kathariou S."/>
            <person name="Wonderling L.D."/>
            <person name="Uhlich G.A."/>
            <person name="Bayles D.O."/>
            <person name="Luchansky J.B."/>
            <person name="Fraser C.M."/>
        </authorList>
    </citation>
    <scope>NUCLEOTIDE SEQUENCE [LARGE SCALE GENOMIC DNA]</scope>
    <source>
        <strain>F2365</strain>
    </source>
</reference>
<dbReference type="EMBL" id="AE017262">
    <property type="protein sequence ID" value="AAT02994.1"/>
    <property type="molecule type" value="Genomic_DNA"/>
</dbReference>
<dbReference type="SMR" id="Q724L7"/>
<dbReference type="KEGG" id="lmf:LMOf2365_0207"/>
<dbReference type="HOGENOM" id="CLU_103669_2_1_9"/>
<dbReference type="PHI-base" id="PHI:6189"/>
<dbReference type="GO" id="GO:0000917">
    <property type="term" value="P:division septum assembly"/>
    <property type="evidence" value="ECO:0007669"/>
    <property type="project" value="UniProtKB-KW"/>
</dbReference>
<dbReference type="GO" id="GO:0030435">
    <property type="term" value="P:sporulation resulting in formation of a cellular spore"/>
    <property type="evidence" value="ECO:0007669"/>
    <property type="project" value="InterPro"/>
</dbReference>
<dbReference type="FunFam" id="3.30.1120.40:FF:000001">
    <property type="entry name" value="Putative septation protein SpoVG"/>
    <property type="match status" value="1"/>
</dbReference>
<dbReference type="Gene3D" id="3.30.1120.40">
    <property type="entry name" value="Stage V sporulation protein G"/>
    <property type="match status" value="1"/>
</dbReference>
<dbReference type="HAMAP" id="MF_00819">
    <property type="entry name" value="SpoVG"/>
    <property type="match status" value="1"/>
</dbReference>
<dbReference type="InterPro" id="IPR007170">
    <property type="entry name" value="SpoVG"/>
</dbReference>
<dbReference type="InterPro" id="IPR036751">
    <property type="entry name" value="SpoVG_sf"/>
</dbReference>
<dbReference type="NCBIfam" id="NF009749">
    <property type="entry name" value="PRK13259.1"/>
    <property type="match status" value="1"/>
</dbReference>
<dbReference type="PANTHER" id="PTHR38429">
    <property type="entry name" value="SEPTATION PROTEIN SPOVG-RELATED"/>
    <property type="match status" value="1"/>
</dbReference>
<dbReference type="PANTHER" id="PTHR38429:SF1">
    <property type="entry name" value="SEPTATION PROTEIN SPOVG-RELATED"/>
    <property type="match status" value="1"/>
</dbReference>
<dbReference type="Pfam" id="PF04026">
    <property type="entry name" value="SpoVG"/>
    <property type="match status" value="1"/>
</dbReference>
<dbReference type="SUPFAM" id="SSF160537">
    <property type="entry name" value="SpoVG-like"/>
    <property type="match status" value="1"/>
</dbReference>
<keyword id="KW-0131">Cell cycle</keyword>
<keyword id="KW-0132">Cell division</keyword>
<keyword id="KW-0717">Septation</keyword>
<protein>
    <recommendedName>
        <fullName evidence="1">Putative septation protein SpoVG 1</fullName>
    </recommendedName>
</protein>
<gene>
    <name evidence="1" type="primary">spoVG1</name>
    <name type="synonym">spoVG-1</name>
    <name type="ordered locus">LMOf2365_0207</name>
</gene>
<evidence type="ECO:0000255" key="1">
    <source>
        <dbReference type="HAMAP-Rule" id="MF_00819"/>
    </source>
</evidence>